<gene>
    <name type="primary">soxR</name>
    <name type="ordered locus">SF4123</name>
    <name type="ordered locus">S3590</name>
</gene>
<keyword id="KW-0001">2Fe-2S</keyword>
<keyword id="KW-0010">Activator</keyword>
<keyword id="KW-0238">DNA-binding</keyword>
<keyword id="KW-0408">Iron</keyword>
<keyword id="KW-0411">Iron-sulfur</keyword>
<keyword id="KW-0479">Metal-binding</keyword>
<keyword id="KW-1185">Reference proteome</keyword>
<keyword id="KW-0804">Transcription</keyword>
<keyword id="KW-0805">Transcription regulation</keyword>
<comment type="function">
    <text evidence="1">Activates the transcription of the soxS gene which itself controls the superoxide response regulon. SoxR contains a 2Fe-2S iron-sulfur cluster that may act as a redox sensor system that recognizes superoxide. The variable redox state of the Fe-S cluster is employed in vivo to modulate the transcriptional activity of SoxR in response to specific types of oxidative stress. Upon reduction of 2Fe-2S cluster, SoxR reversibly loses its transcriptional activity, but retains its DNA binding affinity (By similarity).</text>
</comment>
<comment type="subunit">
    <text evidence="1">Homodimer.</text>
</comment>
<sequence length="154" mass="17150">MEKKLPRIKALLTPGEVAKRSGVAVSALHFYESKGLITSIRNSGNQRRYKRDVLRYVAIIKIAQRIGIPLATIGEAFGVLPEGHTLSAKEWKQLSSQWREELDRRIHTLVALRDELDGCIGCGCLSRSDCPLRNPGDRLGEEGTGARLLEDEQN</sequence>
<name>SOXR_SHIFL</name>
<feature type="chain" id="PRO_0000098154" description="Redox-sensitive transcriptional activator SoxR">
    <location>
        <begin position="1"/>
        <end position="154"/>
    </location>
</feature>
<feature type="domain" description="HTH merR-type" evidence="2">
    <location>
        <begin position="11"/>
        <end position="79"/>
    </location>
</feature>
<feature type="DNA-binding region" description="H-T-H motif" evidence="2">
    <location>
        <begin position="14"/>
        <end position="33"/>
    </location>
</feature>
<feature type="region of interest" description="Might be part of a sensor region" evidence="1">
    <location>
        <begin position="119"/>
        <end position="130"/>
    </location>
</feature>
<feature type="region of interest" description="Disordered" evidence="3">
    <location>
        <begin position="135"/>
        <end position="154"/>
    </location>
</feature>
<feature type="binding site" evidence="1">
    <location>
        <position position="119"/>
    </location>
    <ligand>
        <name>[2Fe-2S] cluster</name>
        <dbReference type="ChEBI" id="CHEBI:190135"/>
    </ligand>
</feature>
<feature type="binding site" evidence="1">
    <location>
        <position position="122"/>
    </location>
    <ligand>
        <name>[2Fe-2S] cluster</name>
        <dbReference type="ChEBI" id="CHEBI:190135"/>
    </ligand>
</feature>
<feature type="binding site" evidence="1">
    <location>
        <position position="124"/>
    </location>
    <ligand>
        <name>[2Fe-2S] cluster</name>
        <dbReference type="ChEBI" id="CHEBI:190135"/>
    </ligand>
</feature>
<feature type="binding site" evidence="1">
    <location>
        <position position="130"/>
    </location>
    <ligand>
        <name>[2Fe-2S] cluster</name>
        <dbReference type="ChEBI" id="CHEBI:190135"/>
    </ligand>
</feature>
<evidence type="ECO:0000250" key="1"/>
<evidence type="ECO:0000255" key="2">
    <source>
        <dbReference type="PROSITE-ProRule" id="PRU00254"/>
    </source>
</evidence>
<evidence type="ECO:0000256" key="3">
    <source>
        <dbReference type="SAM" id="MobiDB-lite"/>
    </source>
</evidence>
<organism>
    <name type="scientific">Shigella flexneri</name>
    <dbReference type="NCBI Taxonomy" id="623"/>
    <lineage>
        <taxon>Bacteria</taxon>
        <taxon>Pseudomonadati</taxon>
        <taxon>Pseudomonadota</taxon>
        <taxon>Gammaproteobacteria</taxon>
        <taxon>Enterobacterales</taxon>
        <taxon>Enterobacteriaceae</taxon>
        <taxon>Shigella</taxon>
    </lineage>
</organism>
<accession>P0ACS4</accession>
<accession>P22538</accession>
<accession>Q53442</accession>
<dbReference type="EMBL" id="AE005674">
    <property type="protein sequence ID" value="AAN45547.1"/>
    <property type="molecule type" value="Genomic_DNA"/>
</dbReference>
<dbReference type="EMBL" id="AE014073">
    <property type="protein sequence ID" value="AAP18635.1"/>
    <property type="molecule type" value="Genomic_DNA"/>
</dbReference>
<dbReference type="RefSeq" id="NP_709840.1">
    <property type="nucleotide sequence ID" value="NC_004337.2"/>
</dbReference>
<dbReference type="RefSeq" id="WP_000412428.1">
    <property type="nucleotide sequence ID" value="NZ_WPGW01000153.1"/>
</dbReference>
<dbReference type="SMR" id="P0ACS4"/>
<dbReference type="STRING" id="198214.SF4123"/>
<dbReference type="PaxDb" id="198214-SF4123"/>
<dbReference type="GeneID" id="1026084"/>
<dbReference type="GeneID" id="86944605"/>
<dbReference type="KEGG" id="sfl:SF4123"/>
<dbReference type="KEGG" id="sfx:S3590"/>
<dbReference type="PATRIC" id="fig|198214.7.peg.4862"/>
<dbReference type="HOGENOM" id="CLU_060077_5_1_6"/>
<dbReference type="Proteomes" id="UP000001006">
    <property type="component" value="Chromosome"/>
</dbReference>
<dbReference type="Proteomes" id="UP000002673">
    <property type="component" value="Chromosome"/>
</dbReference>
<dbReference type="GO" id="GO:0051537">
    <property type="term" value="F:2 iron, 2 sulfur cluster binding"/>
    <property type="evidence" value="ECO:0007669"/>
    <property type="project" value="UniProtKB-KW"/>
</dbReference>
<dbReference type="GO" id="GO:0003677">
    <property type="term" value="F:DNA binding"/>
    <property type="evidence" value="ECO:0007669"/>
    <property type="project" value="UniProtKB-KW"/>
</dbReference>
<dbReference type="GO" id="GO:0003700">
    <property type="term" value="F:DNA-binding transcription factor activity"/>
    <property type="evidence" value="ECO:0007669"/>
    <property type="project" value="InterPro"/>
</dbReference>
<dbReference type="GO" id="GO:0046872">
    <property type="term" value="F:metal ion binding"/>
    <property type="evidence" value="ECO:0007669"/>
    <property type="project" value="UniProtKB-KW"/>
</dbReference>
<dbReference type="GO" id="GO:0006979">
    <property type="term" value="P:response to oxidative stress"/>
    <property type="evidence" value="ECO:0007669"/>
    <property type="project" value="InterPro"/>
</dbReference>
<dbReference type="CDD" id="cd01110">
    <property type="entry name" value="HTH_SoxR"/>
    <property type="match status" value="1"/>
</dbReference>
<dbReference type="FunFam" id="1.10.1660.10:FF:000002">
    <property type="entry name" value="Redox-sensitive transcriptional activator SoxR"/>
    <property type="match status" value="1"/>
</dbReference>
<dbReference type="Gene3D" id="1.10.1660.10">
    <property type="match status" value="1"/>
</dbReference>
<dbReference type="InterPro" id="IPR009061">
    <property type="entry name" value="DNA-bd_dom_put_sf"/>
</dbReference>
<dbReference type="InterPro" id="IPR000551">
    <property type="entry name" value="MerR-type_HTH_dom"/>
</dbReference>
<dbReference type="InterPro" id="IPR047057">
    <property type="entry name" value="MerR_fam"/>
</dbReference>
<dbReference type="InterPro" id="IPR010211">
    <property type="entry name" value="Redox-sen_tscrpt-act_SoxR"/>
</dbReference>
<dbReference type="InterPro" id="IPR015358">
    <property type="entry name" value="Tscrpt_reg_MerR_DNA-bd"/>
</dbReference>
<dbReference type="NCBIfam" id="TIGR01950">
    <property type="entry name" value="SoxR"/>
    <property type="match status" value="1"/>
</dbReference>
<dbReference type="PANTHER" id="PTHR30204">
    <property type="entry name" value="REDOX-CYCLING DRUG-SENSING TRANSCRIPTIONAL ACTIVATOR SOXR"/>
    <property type="match status" value="1"/>
</dbReference>
<dbReference type="PANTHER" id="PTHR30204:SF0">
    <property type="entry name" value="REDOX-SENSITIVE TRANSCRIPTIONAL ACTIVATOR SOXR"/>
    <property type="match status" value="1"/>
</dbReference>
<dbReference type="Pfam" id="PF00376">
    <property type="entry name" value="MerR"/>
    <property type="match status" value="1"/>
</dbReference>
<dbReference type="Pfam" id="PF09278">
    <property type="entry name" value="MerR-DNA-bind"/>
    <property type="match status" value="1"/>
</dbReference>
<dbReference type="PRINTS" id="PR00040">
    <property type="entry name" value="HTHMERR"/>
</dbReference>
<dbReference type="SMART" id="SM00422">
    <property type="entry name" value="HTH_MERR"/>
    <property type="match status" value="1"/>
</dbReference>
<dbReference type="SUPFAM" id="SSF46955">
    <property type="entry name" value="Putative DNA-binding domain"/>
    <property type="match status" value="1"/>
</dbReference>
<dbReference type="PROSITE" id="PS00552">
    <property type="entry name" value="HTH_MERR_1"/>
    <property type="match status" value="1"/>
</dbReference>
<dbReference type="PROSITE" id="PS50937">
    <property type="entry name" value="HTH_MERR_2"/>
    <property type="match status" value="1"/>
</dbReference>
<reference key="1">
    <citation type="journal article" date="2002" name="Nucleic Acids Res.">
        <title>Genome sequence of Shigella flexneri 2a: insights into pathogenicity through comparison with genomes of Escherichia coli K12 and O157.</title>
        <authorList>
            <person name="Jin Q."/>
            <person name="Yuan Z."/>
            <person name="Xu J."/>
            <person name="Wang Y."/>
            <person name="Shen Y."/>
            <person name="Lu W."/>
            <person name="Wang J."/>
            <person name="Liu H."/>
            <person name="Yang J."/>
            <person name="Yang F."/>
            <person name="Zhang X."/>
            <person name="Zhang J."/>
            <person name="Yang G."/>
            <person name="Wu H."/>
            <person name="Qu D."/>
            <person name="Dong J."/>
            <person name="Sun L."/>
            <person name="Xue Y."/>
            <person name="Zhao A."/>
            <person name="Gao Y."/>
            <person name="Zhu J."/>
            <person name="Kan B."/>
            <person name="Ding K."/>
            <person name="Chen S."/>
            <person name="Cheng H."/>
            <person name="Yao Z."/>
            <person name="He B."/>
            <person name="Chen R."/>
            <person name="Ma D."/>
            <person name="Qiang B."/>
            <person name="Wen Y."/>
            <person name="Hou Y."/>
            <person name="Yu J."/>
        </authorList>
    </citation>
    <scope>NUCLEOTIDE SEQUENCE [LARGE SCALE GENOMIC DNA]</scope>
    <source>
        <strain>301 / Serotype 2a</strain>
    </source>
</reference>
<reference key="2">
    <citation type="journal article" date="2003" name="Infect. Immun.">
        <title>Complete genome sequence and comparative genomics of Shigella flexneri serotype 2a strain 2457T.</title>
        <authorList>
            <person name="Wei J."/>
            <person name="Goldberg M.B."/>
            <person name="Burland V."/>
            <person name="Venkatesan M.M."/>
            <person name="Deng W."/>
            <person name="Fournier G."/>
            <person name="Mayhew G.F."/>
            <person name="Plunkett G. III"/>
            <person name="Rose D.J."/>
            <person name="Darling A."/>
            <person name="Mau B."/>
            <person name="Perna N.T."/>
            <person name="Payne S.M."/>
            <person name="Runyen-Janecky L.J."/>
            <person name="Zhou S."/>
            <person name="Schwartz D.C."/>
            <person name="Blattner F.R."/>
        </authorList>
    </citation>
    <scope>NUCLEOTIDE SEQUENCE [LARGE SCALE GENOMIC DNA]</scope>
    <source>
        <strain>ATCC 700930 / 2457T / Serotype 2a</strain>
    </source>
</reference>
<proteinExistence type="inferred from homology"/>
<protein>
    <recommendedName>
        <fullName>Redox-sensitive transcriptional activator SoxR</fullName>
    </recommendedName>
</protein>